<comment type="function">
    <text evidence="1">Catalyzes the interconversion of beta-pyran and beta-furan forms of D-ribose.</text>
</comment>
<comment type="catalytic activity">
    <reaction evidence="1">
        <text>beta-D-ribopyranose = beta-D-ribofuranose</text>
        <dbReference type="Rhea" id="RHEA:25432"/>
        <dbReference type="ChEBI" id="CHEBI:27476"/>
        <dbReference type="ChEBI" id="CHEBI:47002"/>
        <dbReference type="EC" id="5.4.99.62"/>
    </reaction>
</comment>
<comment type="pathway">
    <text evidence="1">Carbohydrate metabolism; D-ribose degradation; D-ribose 5-phosphate from beta-D-ribopyranose: step 1/2.</text>
</comment>
<comment type="subunit">
    <text evidence="1">Homodecamer.</text>
</comment>
<comment type="subcellular location">
    <subcellularLocation>
        <location evidence="1">Cytoplasm</location>
    </subcellularLocation>
</comment>
<comment type="similarity">
    <text evidence="1">Belongs to the RbsD / FucU family. RbsD subfamily.</text>
</comment>
<sequence>MKKAGILNRHLAGALAELGHGDGVLVCDAGMPVPDGPRVVDLAFRAGVPSFAEVVDGLLAELVVEGATAATEVREANAECAALLDGLFPALALVPHERLKELSAGARLIVRTGEARPYANVLLRCGVFF</sequence>
<reference key="1">
    <citation type="journal article" date="2002" name="Nature">
        <title>Complete genome sequence of the model actinomycete Streptomyces coelicolor A3(2).</title>
        <authorList>
            <person name="Bentley S.D."/>
            <person name="Chater K.F."/>
            <person name="Cerdeno-Tarraga A.-M."/>
            <person name="Challis G.L."/>
            <person name="Thomson N.R."/>
            <person name="James K.D."/>
            <person name="Harris D.E."/>
            <person name="Quail M.A."/>
            <person name="Kieser H."/>
            <person name="Harper D."/>
            <person name="Bateman A."/>
            <person name="Brown S."/>
            <person name="Chandra G."/>
            <person name="Chen C.W."/>
            <person name="Collins M."/>
            <person name="Cronin A."/>
            <person name="Fraser A."/>
            <person name="Goble A."/>
            <person name="Hidalgo J."/>
            <person name="Hornsby T."/>
            <person name="Howarth S."/>
            <person name="Huang C.-H."/>
            <person name="Kieser T."/>
            <person name="Larke L."/>
            <person name="Murphy L.D."/>
            <person name="Oliver K."/>
            <person name="O'Neil S."/>
            <person name="Rabbinowitsch E."/>
            <person name="Rajandream M.A."/>
            <person name="Rutherford K.M."/>
            <person name="Rutter S."/>
            <person name="Seeger K."/>
            <person name="Saunders D."/>
            <person name="Sharp S."/>
            <person name="Squares R."/>
            <person name="Squares S."/>
            <person name="Taylor K."/>
            <person name="Warren T."/>
            <person name="Wietzorrek A."/>
            <person name="Woodward J.R."/>
            <person name="Barrell B.G."/>
            <person name="Parkhill J."/>
            <person name="Hopwood D.A."/>
        </authorList>
    </citation>
    <scope>NUCLEOTIDE SEQUENCE [LARGE SCALE GENOMIC DNA]</scope>
    <source>
        <strain>ATCC BAA-471 / A3(2) / M145</strain>
    </source>
</reference>
<organism>
    <name type="scientific">Streptomyces coelicolor (strain ATCC BAA-471 / A3(2) / M145)</name>
    <dbReference type="NCBI Taxonomy" id="100226"/>
    <lineage>
        <taxon>Bacteria</taxon>
        <taxon>Bacillati</taxon>
        <taxon>Actinomycetota</taxon>
        <taxon>Actinomycetes</taxon>
        <taxon>Kitasatosporales</taxon>
        <taxon>Streptomycetaceae</taxon>
        <taxon>Streptomyces</taxon>
        <taxon>Streptomyces albidoflavus group</taxon>
    </lineage>
</organism>
<name>RBSD_STRCO</name>
<evidence type="ECO:0000255" key="1">
    <source>
        <dbReference type="HAMAP-Rule" id="MF_01661"/>
    </source>
</evidence>
<feature type="chain" id="PRO_0000346283" description="D-ribose pyranase">
    <location>
        <begin position="1"/>
        <end position="129"/>
    </location>
</feature>
<feature type="active site" description="Proton donor" evidence="1">
    <location>
        <position position="20"/>
    </location>
</feature>
<feature type="binding site" evidence="1">
    <location>
        <position position="28"/>
    </location>
    <ligand>
        <name>substrate</name>
    </ligand>
</feature>
<feature type="binding site" evidence="1">
    <location>
        <position position="96"/>
    </location>
    <ligand>
        <name>substrate</name>
    </ligand>
</feature>
<feature type="binding site" evidence="1">
    <location>
        <begin position="118"/>
        <end position="120"/>
    </location>
    <ligand>
        <name>substrate</name>
    </ligand>
</feature>
<gene>
    <name evidence="1" type="primary">rbsD</name>
    <name type="ordered locus">SCO2749</name>
    <name type="ORF">SCC57A.20</name>
</gene>
<proteinExistence type="inferred from homology"/>
<protein>
    <recommendedName>
        <fullName evidence="1">D-ribose pyranase</fullName>
        <ecNumber evidence="1">5.4.99.62</ecNumber>
    </recommendedName>
</protein>
<accession>Q9RDH8</accession>
<dbReference type="EC" id="5.4.99.62" evidence="1"/>
<dbReference type="EMBL" id="AL939113">
    <property type="protein sequence ID" value="CAB66288.1"/>
    <property type="molecule type" value="Genomic_DNA"/>
</dbReference>
<dbReference type="RefSeq" id="NP_626980.1">
    <property type="nucleotide sequence ID" value="NC_003888.3"/>
</dbReference>
<dbReference type="RefSeq" id="WP_011028559.1">
    <property type="nucleotide sequence ID" value="NZ_VNID01000020.1"/>
</dbReference>
<dbReference type="SMR" id="Q9RDH8"/>
<dbReference type="STRING" id="100226.gene:17760356"/>
<dbReference type="PaxDb" id="100226-SCO2749"/>
<dbReference type="GeneID" id="91386250"/>
<dbReference type="KEGG" id="sco:SCO2749"/>
<dbReference type="PATRIC" id="fig|100226.15.peg.2805"/>
<dbReference type="eggNOG" id="COG1869">
    <property type="taxonomic scope" value="Bacteria"/>
</dbReference>
<dbReference type="HOGENOM" id="CLU_135498_0_0_11"/>
<dbReference type="InParanoid" id="Q9RDH8"/>
<dbReference type="OrthoDB" id="9805009at2"/>
<dbReference type="PhylomeDB" id="Q9RDH8"/>
<dbReference type="UniPathway" id="UPA00916">
    <property type="reaction ID" value="UER00888"/>
</dbReference>
<dbReference type="Proteomes" id="UP000001973">
    <property type="component" value="Chromosome"/>
</dbReference>
<dbReference type="GO" id="GO:0005829">
    <property type="term" value="C:cytosol"/>
    <property type="evidence" value="ECO:0000318"/>
    <property type="project" value="GO_Central"/>
</dbReference>
<dbReference type="GO" id="GO:0062193">
    <property type="term" value="F:D-ribose pyranase activity"/>
    <property type="evidence" value="ECO:0007669"/>
    <property type="project" value="UniProtKB-EC"/>
</dbReference>
<dbReference type="GO" id="GO:0016872">
    <property type="term" value="F:intramolecular lyase activity"/>
    <property type="evidence" value="ECO:0007669"/>
    <property type="project" value="UniProtKB-UniRule"/>
</dbReference>
<dbReference type="GO" id="GO:0016866">
    <property type="term" value="F:intramolecular transferase activity"/>
    <property type="evidence" value="ECO:0000318"/>
    <property type="project" value="GO_Central"/>
</dbReference>
<dbReference type="GO" id="GO:0048029">
    <property type="term" value="F:monosaccharide binding"/>
    <property type="evidence" value="ECO:0007669"/>
    <property type="project" value="InterPro"/>
</dbReference>
<dbReference type="GO" id="GO:0019303">
    <property type="term" value="P:D-ribose catabolic process"/>
    <property type="evidence" value="ECO:0000318"/>
    <property type="project" value="GO_Central"/>
</dbReference>
<dbReference type="FunFam" id="3.40.1650.10:FF:000004">
    <property type="entry name" value="D-ribose pyranase"/>
    <property type="match status" value="1"/>
</dbReference>
<dbReference type="Gene3D" id="3.40.1650.10">
    <property type="entry name" value="RbsD-like domain"/>
    <property type="match status" value="1"/>
</dbReference>
<dbReference type="HAMAP" id="MF_01661">
    <property type="entry name" value="D_rib_pyranase"/>
    <property type="match status" value="1"/>
</dbReference>
<dbReference type="InterPro" id="IPR023064">
    <property type="entry name" value="D-ribose_pyranase"/>
</dbReference>
<dbReference type="InterPro" id="IPR023750">
    <property type="entry name" value="RbsD-like_sf"/>
</dbReference>
<dbReference type="InterPro" id="IPR007721">
    <property type="entry name" value="RbsD_FucU"/>
</dbReference>
<dbReference type="NCBIfam" id="NF008761">
    <property type="entry name" value="PRK11797.1"/>
    <property type="match status" value="1"/>
</dbReference>
<dbReference type="PANTHER" id="PTHR37831">
    <property type="entry name" value="D-RIBOSE PYRANASE"/>
    <property type="match status" value="1"/>
</dbReference>
<dbReference type="PANTHER" id="PTHR37831:SF1">
    <property type="entry name" value="D-RIBOSE PYRANASE"/>
    <property type="match status" value="1"/>
</dbReference>
<dbReference type="Pfam" id="PF05025">
    <property type="entry name" value="RbsD_FucU"/>
    <property type="match status" value="1"/>
</dbReference>
<dbReference type="SUPFAM" id="SSF102546">
    <property type="entry name" value="RbsD-like"/>
    <property type="match status" value="1"/>
</dbReference>
<keyword id="KW-0119">Carbohydrate metabolism</keyword>
<keyword id="KW-0963">Cytoplasm</keyword>
<keyword id="KW-0413">Isomerase</keyword>
<keyword id="KW-1185">Reference proteome</keyword>